<feature type="chain" id="PRO_0000324523" description="Protein polyglycylase TTLL10">
    <location>
        <begin position="1"/>
        <end position="679"/>
    </location>
</feature>
<feature type="domain" description="TTL" evidence="4">
    <location>
        <begin position="172"/>
        <end position="543"/>
    </location>
</feature>
<feature type="region of interest" description="Disordered" evidence="5">
    <location>
        <begin position="1"/>
        <end position="33"/>
    </location>
</feature>
<feature type="region of interest" description="Disordered" evidence="5">
    <location>
        <begin position="49"/>
        <end position="77"/>
    </location>
</feature>
<feature type="region of interest" description="Disordered" evidence="5">
    <location>
        <begin position="96"/>
        <end position="124"/>
    </location>
</feature>
<feature type="region of interest" description="Disordered" evidence="5">
    <location>
        <begin position="605"/>
        <end position="679"/>
    </location>
</feature>
<feature type="compositionally biased region" description="Basic residues" evidence="5">
    <location>
        <begin position="1"/>
        <end position="15"/>
    </location>
</feature>
<feature type="compositionally biased region" description="Polar residues" evidence="5">
    <location>
        <begin position="18"/>
        <end position="30"/>
    </location>
</feature>
<feature type="compositionally biased region" description="Basic residues" evidence="5">
    <location>
        <begin position="96"/>
        <end position="110"/>
    </location>
</feature>
<feature type="binding site" evidence="1">
    <location>
        <position position="304"/>
    </location>
    <ligand>
        <name>ATP</name>
        <dbReference type="ChEBI" id="CHEBI:30616"/>
    </ligand>
</feature>
<feature type="binding site" evidence="1">
    <location>
        <begin position="310"/>
        <end position="311"/>
    </location>
    <ligand>
        <name>ATP</name>
        <dbReference type="ChEBI" id="CHEBI:30616"/>
    </ligand>
</feature>
<feature type="binding site" evidence="1">
    <location>
        <position position="310"/>
    </location>
    <ligand>
        <name>a protein</name>
        <dbReference type="ChEBI" id="CHEBI:16541"/>
    </ligand>
    <ligandPart>
        <name>L-glutamate residue</name>
        <dbReference type="ChEBI" id="CHEBI:29973"/>
        <note>L-glutamate acceptor residue in protein target</note>
    </ligandPart>
</feature>
<feature type="binding site" evidence="3">
    <location>
        <begin position="353"/>
        <end position="356"/>
    </location>
    <ligand>
        <name>ATP</name>
        <dbReference type="ChEBI" id="CHEBI:30616"/>
    </ligand>
</feature>
<feature type="binding site" evidence="3">
    <location>
        <begin position="366"/>
        <end position="368"/>
    </location>
    <ligand>
        <name>ATP</name>
        <dbReference type="ChEBI" id="CHEBI:30616"/>
    </ligand>
</feature>
<feature type="binding site" evidence="1">
    <location>
        <begin position="409"/>
        <end position="410"/>
    </location>
    <ligand>
        <name>ATP</name>
        <dbReference type="ChEBI" id="CHEBI:30616"/>
    </ligand>
</feature>
<feature type="binding site" evidence="1">
    <location>
        <position position="489"/>
    </location>
    <ligand>
        <name>Mg(2+)</name>
        <dbReference type="ChEBI" id="CHEBI:18420"/>
        <label>1</label>
    </ligand>
</feature>
<feature type="binding site" evidence="1">
    <location>
        <position position="502"/>
    </location>
    <ligand>
        <name>Mg(2+)</name>
        <dbReference type="ChEBI" id="CHEBI:18420"/>
        <label>1</label>
    </ligand>
</feature>
<feature type="binding site" evidence="1">
    <location>
        <position position="502"/>
    </location>
    <ligand>
        <name>Mg(2+)</name>
        <dbReference type="ChEBI" id="CHEBI:18420"/>
        <label>2</label>
    </ligand>
</feature>
<feature type="binding site" evidence="1">
    <location>
        <position position="504"/>
    </location>
    <ligand>
        <name>Mg(2+)</name>
        <dbReference type="ChEBI" id="CHEBI:18420"/>
        <label>2</label>
    </ligand>
</feature>
<feature type="site" description="Essential for specifying elongation versus initiation step of the polyglycylase activity" evidence="1">
    <location>
        <position position="310"/>
    </location>
</feature>
<feature type="splice variant" id="VSP_032266" description="In isoform 2." evidence="6">
    <location>
        <begin position="1"/>
        <end position="121"/>
    </location>
</feature>
<sequence>MPLHPPARRPHGHRRNGSEAQTEATTQDTGRLSCPRRVGAAVCPIQGLGHRAARRPRRGVGTTSASRAPRPGALMPATRNRPRFIHYRVQPPRTHVSFKRPKRSRTHQSHTKVPGWTHEKRMGSSVEEGLRPELSQLEQDADNLGEEEAARLPVTSLNGLLMEGDRHPNPGQGPFFYIGGTNGASIISNYCESKGWQRTQDSRCEDYKLKWCEIKCRDNYCSFREGQQLLFQLPNNKLLTTKIGLLSALREHARTLSKARLMPSTQAKVLKMDEFFPETYRLDIRDERQAFFTLFDETQMWICKPTASNQGKGIFLIRSQEEAAALQAKTQSIEDDPIYRKMPFRAPQARVVQRYVQNPLLLDGKKFDVRSYMLIACAMPYMVFFGHGYARLTLSLYNPHSSDLSGHLTNQFMQKKSPLYMLLKDSTVWSMEHLNRYINDKFRKSKGLPRDWVFTTFTKRMQQIMSHCFLAVKSKLECKLGYFDLIGCDFLIDENFKVWLLEMNSNPALHTNCEVLKEVIPGVVMETLDLALETCQKSLHSQKMLPLQSQRRFVLLYNGETTDLWPRLGSSRPPIRLPYANSNHARSTCEISSSSLTSTRVTIADRPAARKSMSSRTAPICASRKSRLSDSGGVSIEESETSVCSGLPEGSRDAAREPSLGPTEEEREEEQRSTSHRGS</sequence>
<accession>Q5XI57</accession>
<accession>Q4V8F2</accession>
<organism>
    <name type="scientific">Rattus norvegicus</name>
    <name type="common">Rat</name>
    <dbReference type="NCBI Taxonomy" id="10116"/>
    <lineage>
        <taxon>Eukaryota</taxon>
        <taxon>Metazoa</taxon>
        <taxon>Chordata</taxon>
        <taxon>Craniata</taxon>
        <taxon>Vertebrata</taxon>
        <taxon>Euteleostomi</taxon>
        <taxon>Mammalia</taxon>
        <taxon>Eutheria</taxon>
        <taxon>Euarchontoglires</taxon>
        <taxon>Glires</taxon>
        <taxon>Rodentia</taxon>
        <taxon>Myomorpha</taxon>
        <taxon>Muroidea</taxon>
        <taxon>Muridae</taxon>
        <taxon>Murinae</taxon>
        <taxon>Rattus</taxon>
    </lineage>
</organism>
<evidence type="ECO:0000250" key="1">
    <source>
        <dbReference type="UniProtKB" id="A4Q9E8"/>
    </source>
</evidence>
<evidence type="ECO:0000250" key="2">
    <source>
        <dbReference type="UniProtKB" id="A4Q9F3"/>
    </source>
</evidence>
<evidence type="ECO:0000250" key="3">
    <source>
        <dbReference type="UniProtKB" id="Q6ZT98"/>
    </source>
</evidence>
<evidence type="ECO:0000255" key="4">
    <source>
        <dbReference type="PROSITE-ProRule" id="PRU00568"/>
    </source>
</evidence>
<evidence type="ECO:0000256" key="5">
    <source>
        <dbReference type="SAM" id="MobiDB-lite"/>
    </source>
</evidence>
<evidence type="ECO:0000303" key="6">
    <source>
    </source>
</evidence>
<evidence type="ECO:0000312" key="7">
    <source>
        <dbReference type="RGD" id="1560839"/>
    </source>
</evidence>
<keyword id="KW-0025">Alternative splicing</keyword>
<keyword id="KW-0067">ATP-binding</keyword>
<keyword id="KW-0966">Cell projection</keyword>
<keyword id="KW-0969">Cilium</keyword>
<keyword id="KW-0963">Cytoplasm</keyword>
<keyword id="KW-0206">Cytoskeleton</keyword>
<keyword id="KW-0436">Ligase</keyword>
<keyword id="KW-0460">Magnesium</keyword>
<keyword id="KW-0479">Metal-binding</keyword>
<keyword id="KW-0493">Microtubule</keyword>
<keyword id="KW-0547">Nucleotide-binding</keyword>
<keyword id="KW-1185">Reference proteome</keyword>
<gene>
    <name evidence="7" type="primary">Ttll10</name>
</gene>
<proteinExistence type="evidence at transcript level"/>
<protein>
    <recommendedName>
        <fullName evidence="2">Protein polyglycylase TTLL10</fullName>
        <ecNumber evidence="2">6.3.2.-</ecNumber>
    </recommendedName>
    <alternativeName>
        <fullName>Tubulin--tyrosine ligase-like protein 10</fullName>
    </alternativeName>
</protein>
<comment type="function">
    <text evidence="2">Polyglycylase which modifies both tubulin and non-tubulin proteins, generating polyglycine side chains of variable lengths on the gamma-carboxyl groups of specific glutamate residues of target proteins. Involved in the elongation step rather than the initiation step of the polyglycylation reaction. Polyglycylates alpha-tubulin and beta-tubulin. Polyglycylates non-tubulin proteins such as nucleosome assembly protein NAP1.</text>
</comment>
<comment type="catalytic activity">
    <molecule>Protein polyglycylase TTLL10</molecule>
    <reaction evidence="2">
        <text>(glycyl)(n)-glycyl-L-glutamyl-[protein] + glycine + ATP = (glycyl)(n+1)-glycyl-L-glutamyl-[protein] + ADP + phosphate + H(+)</text>
        <dbReference type="Rhea" id="RHEA:67184"/>
        <dbReference type="Rhea" id="RHEA-COMP:17208"/>
        <dbReference type="Rhea" id="RHEA-COMP:17209"/>
        <dbReference type="ChEBI" id="CHEBI:15378"/>
        <dbReference type="ChEBI" id="CHEBI:30616"/>
        <dbReference type="ChEBI" id="CHEBI:43474"/>
        <dbReference type="ChEBI" id="CHEBI:57305"/>
        <dbReference type="ChEBI" id="CHEBI:167891"/>
        <dbReference type="ChEBI" id="CHEBI:456216"/>
    </reaction>
    <physiologicalReaction direction="left-to-right" evidence="2">
        <dbReference type="Rhea" id="RHEA:67185"/>
    </physiologicalReaction>
</comment>
<comment type="cofactor">
    <cofactor evidence="1">
        <name>Mg(2+)</name>
        <dbReference type="ChEBI" id="CHEBI:18420"/>
    </cofactor>
</comment>
<comment type="subcellular location">
    <subcellularLocation>
        <location evidence="2">Cytoplasm</location>
        <location evidence="2">Cytoskeleton</location>
    </subcellularLocation>
    <subcellularLocation>
        <location evidence="2">Cell projection</location>
        <location evidence="2">Cilium</location>
    </subcellularLocation>
    <subcellularLocation>
        <location evidence="2">Cytoplasm</location>
        <location evidence="2">Cytoskeleton</location>
        <location evidence="2">Cilium axoneme</location>
    </subcellularLocation>
</comment>
<comment type="alternative products">
    <event type="alternative splicing"/>
    <isoform>
        <id>Q5XI57-1</id>
        <name>1</name>
        <sequence type="displayed"/>
    </isoform>
    <isoform>
        <id>Q5XI57-2</id>
        <name>2</name>
        <sequence type="described" ref="VSP_032266"/>
    </isoform>
</comment>
<comment type="domain">
    <text evidence="1">Gln-310 is the main determinant for regioselectivity, which segregates between initiases and elongases in all tubulin--tyrosine ligase family. A glutamine residue at this position is found in elongases TTLL6, TTLL9, TTLL11, TTLL13, TTLL10 and favors glutamate-chain elongation, whereas an arginine residue is found in initiases TTLL2, TTLL4, TTLL5, TTLL3, TTLL8 and favors initiation.</text>
</comment>
<name>TTL10_RAT</name>
<reference key="1">
    <citation type="journal article" date="2004" name="Nature">
        <title>Genome sequence of the Brown Norway rat yields insights into mammalian evolution.</title>
        <authorList>
            <person name="Gibbs R.A."/>
            <person name="Weinstock G.M."/>
            <person name="Metzker M.L."/>
            <person name="Muzny D.M."/>
            <person name="Sodergren E.J."/>
            <person name="Scherer S."/>
            <person name="Scott G."/>
            <person name="Steffen D."/>
            <person name="Worley K.C."/>
            <person name="Burch P.E."/>
            <person name="Okwuonu G."/>
            <person name="Hines S."/>
            <person name="Lewis L."/>
            <person name="Deramo C."/>
            <person name="Delgado O."/>
            <person name="Dugan-Rocha S."/>
            <person name="Miner G."/>
            <person name="Morgan M."/>
            <person name="Hawes A."/>
            <person name="Gill R."/>
            <person name="Holt R.A."/>
            <person name="Adams M.D."/>
            <person name="Amanatides P.G."/>
            <person name="Baden-Tillson H."/>
            <person name="Barnstead M."/>
            <person name="Chin S."/>
            <person name="Evans C.A."/>
            <person name="Ferriera S."/>
            <person name="Fosler C."/>
            <person name="Glodek A."/>
            <person name="Gu Z."/>
            <person name="Jennings D."/>
            <person name="Kraft C.L."/>
            <person name="Nguyen T."/>
            <person name="Pfannkoch C.M."/>
            <person name="Sitter C."/>
            <person name="Sutton G.G."/>
            <person name="Venter J.C."/>
            <person name="Woodage T."/>
            <person name="Smith D."/>
            <person name="Lee H.-M."/>
            <person name="Gustafson E."/>
            <person name="Cahill P."/>
            <person name="Kana A."/>
            <person name="Doucette-Stamm L."/>
            <person name="Weinstock K."/>
            <person name="Fechtel K."/>
            <person name="Weiss R.B."/>
            <person name="Dunn D.M."/>
            <person name="Green E.D."/>
            <person name="Blakesley R.W."/>
            <person name="Bouffard G.G."/>
            <person name="De Jong P.J."/>
            <person name="Osoegawa K."/>
            <person name="Zhu B."/>
            <person name="Marra M."/>
            <person name="Schein J."/>
            <person name="Bosdet I."/>
            <person name="Fjell C."/>
            <person name="Jones S."/>
            <person name="Krzywinski M."/>
            <person name="Mathewson C."/>
            <person name="Siddiqui A."/>
            <person name="Wye N."/>
            <person name="McPherson J."/>
            <person name="Zhao S."/>
            <person name="Fraser C.M."/>
            <person name="Shetty J."/>
            <person name="Shatsman S."/>
            <person name="Geer K."/>
            <person name="Chen Y."/>
            <person name="Abramzon S."/>
            <person name="Nierman W.C."/>
            <person name="Havlak P.H."/>
            <person name="Chen R."/>
            <person name="Durbin K.J."/>
            <person name="Egan A."/>
            <person name="Ren Y."/>
            <person name="Song X.-Z."/>
            <person name="Li B."/>
            <person name="Liu Y."/>
            <person name="Qin X."/>
            <person name="Cawley S."/>
            <person name="Cooney A.J."/>
            <person name="D'Souza L.M."/>
            <person name="Martin K."/>
            <person name="Wu J.Q."/>
            <person name="Gonzalez-Garay M.L."/>
            <person name="Jackson A.R."/>
            <person name="Kalafus K.J."/>
            <person name="McLeod M.P."/>
            <person name="Milosavljevic A."/>
            <person name="Virk D."/>
            <person name="Volkov A."/>
            <person name="Wheeler D.A."/>
            <person name="Zhang Z."/>
            <person name="Bailey J.A."/>
            <person name="Eichler E.E."/>
            <person name="Tuzun E."/>
            <person name="Birney E."/>
            <person name="Mongin E."/>
            <person name="Ureta-Vidal A."/>
            <person name="Woodwark C."/>
            <person name="Zdobnov E."/>
            <person name="Bork P."/>
            <person name="Suyama M."/>
            <person name="Torrents D."/>
            <person name="Alexandersson M."/>
            <person name="Trask B.J."/>
            <person name="Young J.M."/>
            <person name="Huang H."/>
            <person name="Wang H."/>
            <person name="Xing H."/>
            <person name="Daniels S."/>
            <person name="Gietzen D."/>
            <person name="Schmidt J."/>
            <person name="Stevens K."/>
            <person name="Vitt U."/>
            <person name="Wingrove J."/>
            <person name="Camara F."/>
            <person name="Mar Alba M."/>
            <person name="Abril J.F."/>
            <person name="Guigo R."/>
            <person name="Smit A."/>
            <person name="Dubchak I."/>
            <person name="Rubin E.M."/>
            <person name="Couronne O."/>
            <person name="Poliakov A."/>
            <person name="Huebner N."/>
            <person name="Ganten D."/>
            <person name="Goesele C."/>
            <person name="Hummel O."/>
            <person name="Kreitler T."/>
            <person name="Lee Y.-A."/>
            <person name="Monti J."/>
            <person name="Schulz H."/>
            <person name="Zimdahl H."/>
            <person name="Himmelbauer H."/>
            <person name="Lehrach H."/>
            <person name="Jacob H.J."/>
            <person name="Bromberg S."/>
            <person name="Gullings-Handley J."/>
            <person name="Jensen-Seaman M.I."/>
            <person name="Kwitek A.E."/>
            <person name="Lazar J."/>
            <person name="Pasko D."/>
            <person name="Tonellato P.J."/>
            <person name="Twigger S."/>
            <person name="Ponting C.P."/>
            <person name="Duarte J.M."/>
            <person name="Rice S."/>
            <person name="Goodstadt L."/>
            <person name="Beatson S.A."/>
            <person name="Emes R.D."/>
            <person name="Winter E.E."/>
            <person name="Webber C."/>
            <person name="Brandt P."/>
            <person name="Nyakatura G."/>
            <person name="Adetobi M."/>
            <person name="Chiaromonte F."/>
            <person name="Elnitski L."/>
            <person name="Eswara P."/>
            <person name="Hardison R.C."/>
            <person name="Hou M."/>
            <person name="Kolbe D."/>
            <person name="Makova K."/>
            <person name="Miller W."/>
            <person name="Nekrutenko A."/>
            <person name="Riemer C."/>
            <person name="Schwartz S."/>
            <person name="Taylor J."/>
            <person name="Yang S."/>
            <person name="Zhang Y."/>
            <person name="Lindpaintner K."/>
            <person name="Andrews T.D."/>
            <person name="Caccamo M."/>
            <person name="Clamp M."/>
            <person name="Clarke L."/>
            <person name="Curwen V."/>
            <person name="Durbin R.M."/>
            <person name="Eyras E."/>
            <person name="Searle S.M."/>
            <person name="Cooper G.M."/>
            <person name="Batzoglou S."/>
            <person name="Brudno M."/>
            <person name="Sidow A."/>
            <person name="Stone E.A."/>
            <person name="Payseur B.A."/>
            <person name="Bourque G."/>
            <person name="Lopez-Otin C."/>
            <person name="Puente X.S."/>
            <person name="Chakrabarti K."/>
            <person name="Chatterji S."/>
            <person name="Dewey C."/>
            <person name="Pachter L."/>
            <person name="Bray N."/>
            <person name="Yap V.B."/>
            <person name="Caspi A."/>
            <person name="Tesler G."/>
            <person name="Pevzner P.A."/>
            <person name="Haussler D."/>
            <person name="Roskin K.M."/>
            <person name="Baertsch R."/>
            <person name="Clawson H."/>
            <person name="Furey T.S."/>
            <person name="Hinrichs A.S."/>
            <person name="Karolchik D."/>
            <person name="Kent W.J."/>
            <person name="Rosenbloom K.R."/>
            <person name="Trumbower H."/>
            <person name="Weirauch M."/>
            <person name="Cooper D.N."/>
            <person name="Stenson P.D."/>
            <person name="Ma B."/>
            <person name="Brent M."/>
            <person name="Arumugam M."/>
            <person name="Shteynberg D."/>
            <person name="Copley R.R."/>
            <person name="Taylor M.S."/>
            <person name="Riethman H."/>
            <person name="Mudunuri U."/>
            <person name="Peterson J."/>
            <person name="Guyer M."/>
            <person name="Felsenfeld A."/>
            <person name="Old S."/>
            <person name="Mockrin S."/>
            <person name="Collins F.S."/>
        </authorList>
    </citation>
    <scope>NUCLEOTIDE SEQUENCE [LARGE SCALE GENOMIC DNA]</scope>
    <source>
        <strain>Brown Norway</strain>
    </source>
</reference>
<reference key="2">
    <citation type="journal article" date="2004" name="Genome Res.">
        <title>The status, quality, and expansion of the NIH full-length cDNA project: the Mammalian Gene Collection (MGC).</title>
        <authorList>
            <consortium name="The MGC Project Team"/>
        </authorList>
    </citation>
    <scope>NUCLEOTIDE SEQUENCE [LARGE SCALE MRNA] (ISOFORM 2)</scope>
    <scope>NUCLEOTIDE SEQUENCE [LARGE SCALE MRNA] OF 115-679 (ISOFORM 1)</scope>
    <source>
        <tissue>Testis</tissue>
    </source>
</reference>
<dbReference type="EC" id="6.3.2.-" evidence="2"/>
<dbReference type="EMBL" id="AABR03041793">
    <property type="status" value="NOT_ANNOTATED_CDS"/>
    <property type="molecule type" value="Genomic_DNA"/>
</dbReference>
<dbReference type="EMBL" id="BC083833">
    <property type="protein sequence ID" value="AAH83833.1"/>
    <property type="molecule type" value="mRNA"/>
</dbReference>
<dbReference type="EMBL" id="BC097417">
    <property type="protein sequence ID" value="AAH97417.1"/>
    <property type="molecule type" value="mRNA"/>
</dbReference>
<dbReference type="RefSeq" id="NP_001019929.1">
    <molecule id="Q5XI57-2"/>
    <property type="nucleotide sequence ID" value="NM_001024758.2"/>
</dbReference>
<dbReference type="RefSeq" id="NP_001164004.1">
    <property type="nucleotide sequence ID" value="NM_001170533.1"/>
</dbReference>
<dbReference type="RefSeq" id="XP_006239624.1">
    <molecule id="Q5XI57-2"/>
    <property type="nucleotide sequence ID" value="XM_006239562.5"/>
</dbReference>
<dbReference type="RefSeq" id="XP_063143581.1">
    <molecule id="Q5XI57-1"/>
    <property type="nucleotide sequence ID" value="XM_063287511.1"/>
</dbReference>
<dbReference type="SMR" id="Q5XI57"/>
<dbReference type="FunCoup" id="Q5XI57">
    <property type="interactions" value="8"/>
</dbReference>
<dbReference type="STRING" id="10116.ENSRNOP00000070186"/>
<dbReference type="PhosphoSitePlus" id="Q5XI57"/>
<dbReference type="PaxDb" id="10116-ENSRNOP00000063596"/>
<dbReference type="GeneID" id="298692"/>
<dbReference type="KEGG" id="rno:298692"/>
<dbReference type="AGR" id="RGD:1560839"/>
<dbReference type="CTD" id="254173"/>
<dbReference type="RGD" id="1560839">
    <property type="gene designation" value="Ttll10"/>
</dbReference>
<dbReference type="VEuPathDB" id="HostDB:ENSRNOG00000020132"/>
<dbReference type="eggNOG" id="KOG2157">
    <property type="taxonomic scope" value="Eukaryota"/>
</dbReference>
<dbReference type="HOGENOM" id="CLU_022993_1_0_1"/>
<dbReference type="InParanoid" id="Q5XI57"/>
<dbReference type="OrthoDB" id="56710at9989"/>
<dbReference type="PhylomeDB" id="Q5XI57"/>
<dbReference type="TreeFam" id="TF329363"/>
<dbReference type="Reactome" id="R-RNO-8955332">
    <property type="pathway name" value="Carboxyterminal post-translational modifications of tubulin"/>
</dbReference>
<dbReference type="PRO" id="PR:Q5XI57"/>
<dbReference type="Proteomes" id="UP000002494">
    <property type="component" value="Chromosome 5"/>
</dbReference>
<dbReference type="Bgee" id="ENSRNOG00000020132">
    <property type="expression patterns" value="Expressed in testis and 11 other cell types or tissues"/>
</dbReference>
<dbReference type="ExpressionAtlas" id="Q5XI57">
    <property type="expression patterns" value="baseline and differential"/>
</dbReference>
<dbReference type="GO" id="GO:0005930">
    <property type="term" value="C:axoneme"/>
    <property type="evidence" value="ECO:0000250"/>
    <property type="project" value="UniProtKB"/>
</dbReference>
<dbReference type="GO" id="GO:0005929">
    <property type="term" value="C:cilium"/>
    <property type="evidence" value="ECO:0000250"/>
    <property type="project" value="UniProtKB"/>
</dbReference>
<dbReference type="GO" id="GO:0005874">
    <property type="term" value="C:microtubule"/>
    <property type="evidence" value="ECO:0007669"/>
    <property type="project" value="UniProtKB-KW"/>
</dbReference>
<dbReference type="GO" id="GO:0015630">
    <property type="term" value="C:microtubule cytoskeleton"/>
    <property type="evidence" value="ECO:0000250"/>
    <property type="project" value="UniProtKB"/>
</dbReference>
<dbReference type="GO" id="GO:0005524">
    <property type="term" value="F:ATP binding"/>
    <property type="evidence" value="ECO:0007669"/>
    <property type="project" value="UniProtKB-KW"/>
</dbReference>
<dbReference type="GO" id="GO:0046872">
    <property type="term" value="F:metal ion binding"/>
    <property type="evidence" value="ECO:0007669"/>
    <property type="project" value="UniProtKB-KW"/>
</dbReference>
<dbReference type="GO" id="GO:0070735">
    <property type="term" value="F:protein-glycine ligase activity"/>
    <property type="evidence" value="ECO:0000250"/>
    <property type="project" value="UniProtKB"/>
</dbReference>
<dbReference type="GO" id="GO:0070737">
    <property type="term" value="F:protein-glycine ligase activity, elongating"/>
    <property type="evidence" value="ECO:0000250"/>
    <property type="project" value="UniProtKB"/>
</dbReference>
<dbReference type="GO" id="GO:0018094">
    <property type="term" value="P:protein polyglycylation"/>
    <property type="evidence" value="ECO:0000250"/>
    <property type="project" value="UniProtKB"/>
</dbReference>
<dbReference type="FunFam" id="3.30.470.20:FF:000046">
    <property type="entry name" value="inactive polyglycylase TTLL10"/>
    <property type="match status" value="1"/>
</dbReference>
<dbReference type="Gene3D" id="3.30.470.20">
    <property type="entry name" value="ATP-grasp fold, B domain"/>
    <property type="match status" value="1"/>
</dbReference>
<dbReference type="InterPro" id="IPR004344">
    <property type="entry name" value="TTL/TTLL_fam"/>
</dbReference>
<dbReference type="InterPro" id="IPR027752">
    <property type="entry name" value="TTLL10"/>
</dbReference>
<dbReference type="PANTHER" id="PTHR46810">
    <property type="entry name" value="INACTIVE POLYGLYCYLASE TTLL10"/>
    <property type="match status" value="1"/>
</dbReference>
<dbReference type="PANTHER" id="PTHR46810:SF1">
    <property type="entry name" value="INACTIVE POLYGLYCYLASE TTLL10"/>
    <property type="match status" value="1"/>
</dbReference>
<dbReference type="Pfam" id="PF03133">
    <property type="entry name" value="TTL"/>
    <property type="match status" value="1"/>
</dbReference>
<dbReference type="SUPFAM" id="SSF56059">
    <property type="entry name" value="Glutathione synthetase ATP-binding domain-like"/>
    <property type="match status" value="1"/>
</dbReference>
<dbReference type="PROSITE" id="PS51221">
    <property type="entry name" value="TTL"/>
    <property type="match status" value="1"/>
</dbReference>